<dbReference type="EC" id="3.1.3.21" evidence="3"/>
<dbReference type="EC" id="3.1.3.48" evidence="3"/>
<dbReference type="EMBL" id="AJ851389">
    <property type="protein sequence ID" value="CAH65023.1"/>
    <property type="molecule type" value="mRNA"/>
</dbReference>
<dbReference type="RefSeq" id="NP_001025809.1">
    <property type="nucleotide sequence ID" value="NM_001030638.1"/>
</dbReference>
<dbReference type="SMR" id="Q5F4B1"/>
<dbReference type="FunCoup" id="Q5F4B1">
    <property type="interactions" value="665"/>
</dbReference>
<dbReference type="STRING" id="9031.ENSGALP00000009453"/>
<dbReference type="PaxDb" id="9031-ENSGALP00000009453"/>
<dbReference type="GeneID" id="416559"/>
<dbReference type="KEGG" id="gga:416559"/>
<dbReference type="CTD" id="283871"/>
<dbReference type="VEuPathDB" id="HostDB:geneid_416559"/>
<dbReference type="eggNOG" id="KOG2882">
    <property type="taxonomic scope" value="Eukaryota"/>
</dbReference>
<dbReference type="InParanoid" id="Q5F4B1"/>
<dbReference type="OrthoDB" id="413953at2759"/>
<dbReference type="PhylomeDB" id="Q5F4B1"/>
<dbReference type="PRO" id="PR:Q5F4B1"/>
<dbReference type="Proteomes" id="UP000000539">
    <property type="component" value="Unassembled WGS sequence"/>
</dbReference>
<dbReference type="GO" id="GO:0005737">
    <property type="term" value="C:cytoplasm"/>
    <property type="evidence" value="ECO:0000318"/>
    <property type="project" value="GO_Central"/>
</dbReference>
<dbReference type="GO" id="GO:0000121">
    <property type="term" value="F:glycerol-1-phosphatase activity"/>
    <property type="evidence" value="ECO:0007669"/>
    <property type="project" value="RHEA"/>
</dbReference>
<dbReference type="GO" id="GO:0043136">
    <property type="term" value="F:glycerol-3-phosphatase activity"/>
    <property type="evidence" value="ECO:0000250"/>
    <property type="project" value="UniProtKB"/>
</dbReference>
<dbReference type="GO" id="GO:0046872">
    <property type="term" value="F:metal ion binding"/>
    <property type="evidence" value="ECO:0007669"/>
    <property type="project" value="UniProtKB-KW"/>
</dbReference>
<dbReference type="GO" id="GO:0004725">
    <property type="term" value="F:protein tyrosine phosphatase activity"/>
    <property type="evidence" value="ECO:0007669"/>
    <property type="project" value="UniProtKB-EC"/>
</dbReference>
<dbReference type="GO" id="GO:0006114">
    <property type="term" value="P:glycerol biosynthetic process"/>
    <property type="evidence" value="ECO:0000250"/>
    <property type="project" value="UniProtKB"/>
</dbReference>
<dbReference type="GO" id="GO:0006650">
    <property type="term" value="P:glycerophospholipid metabolic process"/>
    <property type="evidence" value="ECO:0000250"/>
    <property type="project" value="UniProtKB"/>
</dbReference>
<dbReference type="GO" id="GO:0045721">
    <property type="term" value="P:negative regulation of gluconeogenesis"/>
    <property type="evidence" value="ECO:0000250"/>
    <property type="project" value="UniProtKB"/>
</dbReference>
<dbReference type="CDD" id="cd07510">
    <property type="entry name" value="HAD_Pase_UmpH-like"/>
    <property type="match status" value="1"/>
</dbReference>
<dbReference type="FunFam" id="3.40.50.1000:FF:000123">
    <property type="entry name" value="glycerol-3-phosphate phosphatase"/>
    <property type="match status" value="1"/>
</dbReference>
<dbReference type="Gene3D" id="3.40.50.1000">
    <property type="entry name" value="HAD superfamily/HAD-like"/>
    <property type="match status" value="2"/>
</dbReference>
<dbReference type="InterPro" id="IPR036412">
    <property type="entry name" value="HAD-like_sf"/>
</dbReference>
<dbReference type="InterPro" id="IPR006357">
    <property type="entry name" value="HAD-SF_hydro_IIA"/>
</dbReference>
<dbReference type="InterPro" id="IPR023214">
    <property type="entry name" value="HAD_sf"/>
</dbReference>
<dbReference type="InterPro" id="IPR006349">
    <property type="entry name" value="PGP_euk"/>
</dbReference>
<dbReference type="NCBIfam" id="TIGR01460">
    <property type="entry name" value="HAD-SF-IIA"/>
    <property type="match status" value="1"/>
</dbReference>
<dbReference type="NCBIfam" id="TIGR01452">
    <property type="entry name" value="PGP_euk"/>
    <property type="match status" value="1"/>
</dbReference>
<dbReference type="PANTHER" id="PTHR19288">
    <property type="entry name" value="4-NITROPHENYLPHOSPHATASE-RELATED"/>
    <property type="match status" value="1"/>
</dbReference>
<dbReference type="PANTHER" id="PTHR19288:SF92">
    <property type="entry name" value="GLYCEROL-3-PHOSPHATE PHOSPHATASE"/>
    <property type="match status" value="1"/>
</dbReference>
<dbReference type="Pfam" id="PF13344">
    <property type="entry name" value="Hydrolase_6"/>
    <property type="match status" value="1"/>
</dbReference>
<dbReference type="Pfam" id="PF13242">
    <property type="entry name" value="Hydrolase_like"/>
    <property type="match status" value="1"/>
</dbReference>
<dbReference type="PIRSF" id="PIRSF000915">
    <property type="entry name" value="PGP-type_phosphatase"/>
    <property type="match status" value="1"/>
</dbReference>
<dbReference type="SUPFAM" id="SSF56784">
    <property type="entry name" value="HAD-like"/>
    <property type="match status" value="1"/>
</dbReference>
<proteinExistence type="evidence at transcript level"/>
<gene>
    <name evidence="1" type="primary">PGP</name>
    <name evidence="5" type="ORF">RCJMB04_1e2</name>
</gene>
<name>PGP_CHICK</name>
<reference key="1">
    <citation type="journal article" date="2005" name="Genome Biol.">
        <title>Full-length cDNAs from chicken bursal lymphocytes to facilitate gene function analysis.</title>
        <authorList>
            <person name="Caldwell R.B."/>
            <person name="Kierzek A.M."/>
            <person name="Arakawa H."/>
            <person name="Bezzubov Y."/>
            <person name="Zaim J."/>
            <person name="Fiedler P."/>
            <person name="Kutter S."/>
            <person name="Blagodatski A."/>
            <person name="Kostovska D."/>
            <person name="Koter M."/>
            <person name="Plachy J."/>
            <person name="Carninci P."/>
            <person name="Hayashizaki Y."/>
            <person name="Buerstedde J.-M."/>
        </authorList>
    </citation>
    <scope>NUCLEOTIDE SEQUENCE [LARGE SCALE MRNA]</scope>
    <source>
        <strain>CB</strain>
        <tissue>Bursa of Fabricius</tissue>
    </source>
</reference>
<evidence type="ECO:0000250" key="1">
    <source>
        <dbReference type="UniProtKB" id="A6NDG6"/>
    </source>
</evidence>
<evidence type="ECO:0000250" key="2">
    <source>
        <dbReference type="UniProtKB" id="P60487"/>
    </source>
</evidence>
<evidence type="ECO:0000250" key="3">
    <source>
        <dbReference type="UniProtKB" id="Q8CHP8"/>
    </source>
</evidence>
<evidence type="ECO:0000305" key="4"/>
<evidence type="ECO:0000312" key="5">
    <source>
        <dbReference type="EMBL" id="CAH65023.1"/>
    </source>
</evidence>
<accession>Q5F4B1</accession>
<comment type="function">
    <text evidence="1 3">Glycerol-3-phosphate phosphatase hydrolyzing glycerol-3-phosphate into glycerol. Thereby, regulates the cellular levels of glycerol-3-phosphate a metabolic intermediate of glucose, lipid and energy metabolism. Was also shown to have a 2-phosphoglycolate phosphatase activity and a tyrosine-protein phosphatase activity. However, their physiological relevance is unclear. In vitro, also has a phosphatase activity toward ADP, ATP, GDP and GTP.</text>
</comment>
<comment type="catalytic activity">
    <reaction evidence="3">
        <text>O-phospho-L-tyrosyl-[protein] + H2O = L-tyrosyl-[protein] + phosphate</text>
        <dbReference type="Rhea" id="RHEA:10684"/>
        <dbReference type="Rhea" id="RHEA-COMP:10136"/>
        <dbReference type="Rhea" id="RHEA-COMP:20101"/>
        <dbReference type="ChEBI" id="CHEBI:15377"/>
        <dbReference type="ChEBI" id="CHEBI:43474"/>
        <dbReference type="ChEBI" id="CHEBI:46858"/>
        <dbReference type="ChEBI" id="CHEBI:61978"/>
        <dbReference type="EC" id="3.1.3.48"/>
    </reaction>
</comment>
<comment type="catalytic activity">
    <reaction evidence="3">
        <text>sn-glycerol 1-phosphate + H2O = glycerol + phosphate</text>
        <dbReference type="Rhea" id="RHEA:46084"/>
        <dbReference type="ChEBI" id="CHEBI:15377"/>
        <dbReference type="ChEBI" id="CHEBI:17754"/>
        <dbReference type="ChEBI" id="CHEBI:43474"/>
        <dbReference type="ChEBI" id="CHEBI:57685"/>
        <dbReference type="EC" id="3.1.3.21"/>
    </reaction>
</comment>
<comment type="catalytic activity">
    <reaction evidence="3">
        <text>sn-glycerol 3-phosphate + H2O = glycerol + phosphate</text>
        <dbReference type="Rhea" id="RHEA:66372"/>
        <dbReference type="ChEBI" id="CHEBI:15377"/>
        <dbReference type="ChEBI" id="CHEBI:17754"/>
        <dbReference type="ChEBI" id="CHEBI:43474"/>
        <dbReference type="ChEBI" id="CHEBI:57597"/>
        <dbReference type="EC" id="3.1.3.21"/>
    </reaction>
</comment>
<comment type="cofactor">
    <cofactor evidence="3">
        <name>Mg(2+)</name>
        <dbReference type="ChEBI" id="CHEBI:18420"/>
    </cofactor>
    <text evidence="3">Binds 1 Mg(2+) ion per subunit.</text>
</comment>
<comment type="subunit">
    <text evidence="3">Homodimer.</text>
</comment>
<comment type="similarity">
    <text evidence="4">Belongs to the HAD-like hydrolase superfamily. CbbY/CbbZ/Gph/YieH family.</text>
</comment>
<sequence>MAATGGRRCRRLEGETARAVLANVDTLLFDCDGVLWRGEAALSGAPAALGRLAAAGKRLCYVTNNSSRTRVAYTEKLRRLGFPPAEPRHVFGSAFCAARYLRQALPPGAAAYVLGGPALSAELEAAGIPHLGPGPAALPGPAPADWAQAPLEPAVRAVLVGFDEHFSYAKLCQALRYLLRGPDCLLVGTNRDNRLPLEGGSAIPGTGCLVKAVETAAEREALIVGKPSRYIFDCVASEFDIDPARTIMVGDRLDTDILMGNTCGLTTLLTLTGVSTLEEVRGHQESDCPARQGLVPDYYVDSIADLLPALED</sequence>
<protein>
    <recommendedName>
        <fullName evidence="4">Glycerol-3-phosphate phosphatase</fullName>
        <shortName evidence="3">G3PP</shortName>
        <ecNumber evidence="3">3.1.3.21</ecNumber>
    </recommendedName>
    <alternativeName>
        <fullName evidence="3">Aspartate-based ubiquitous Mg(2+)-dependent phosphatase</fullName>
        <shortName evidence="3">AUM</shortName>
        <ecNumber evidence="3">3.1.3.48</ecNumber>
    </alternativeName>
    <alternativeName>
        <fullName evidence="3">Phosphoglycolate phosphatase</fullName>
        <shortName evidence="3">PGP</shortName>
    </alternativeName>
</protein>
<feature type="chain" id="PRO_0000316890" description="Glycerol-3-phosphate phosphatase">
    <location>
        <begin position="1"/>
        <end position="312"/>
    </location>
</feature>
<feature type="active site" description="Nucleophile" evidence="3">
    <location>
        <position position="30"/>
    </location>
</feature>
<feature type="active site" description="Proton donor" evidence="3">
    <location>
        <position position="32"/>
    </location>
</feature>
<feature type="binding site" evidence="2">
    <location>
        <position position="30"/>
    </location>
    <ligand>
        <name>Mg(2+)</name>
        <dbReference type="ChEBI" id="CHEBI:18420"/>
    </ligand>
</feature>
<feature type="binding site" evidence="2">
    <location>
        <position position="32"/>
    </location>
    <ligand>
        <name>Mg(2+)</name>
        <dbReference type="ChEBI" id="CHEBI:18420"/>
    </ligand>
</feature>
<feature type="binding site" evidence="2">
    <location>
        <position position="251"/>
    </location>
    <ligand>
        <name>Mg(2+)</name>
        <dbReference type="ChEBI" id="CHEBI:18420"/>
    </ligand>
</feature>
<feature type="site" description="Important for substrate specificity" evidence="3">
    <location>
        <position position="195"/>
    </location>
</feature>
<organism>
    <name type="scientific">Gallus gallus</name>
    <name type="common">Chicken</name>
    <dbReference type="NCBI Taxonomy" id="9031"/>
    <lineage>
        <taxon>Eukaryota</taxon>
        <taxon>Metazoa</taxon>
        <taxon>Chordata</taxon>
        <taxon>Craniata</taxon>
        <taxon>Vertebrata</taxon>
        <taxon>Euteleostomi</taxon>
        <taxon>Archelosauria</taxon>
        <taxon>Archosauria</taxon>
        <taxon>Dinosauria</taxon>
        <taxon>Saurischia</taxon>
        <taxon>Theropoda</taxon>
        <taxon>Coelurosauria</taxon>
        <taxon>Aves</taxon>
        <taxon>Neognathae</taxon>
        <taxon>Galloanserae</taxon>
        <taxon>Galliformes</taxon>
        <taxon>Phasianidae</taxon>
        <taxon>Phasianinae</taxon>
        <taxon>Gallus</taxon>
    </lineage>
</organism>
<keyword id="KW-0119">Carbohydrate metabolism</keyword>
<keyword id="KW-0378">Hydrolase</keyword>
<keyword id="KW-0460">Magnesium</keyword>
<keyword id="KW-0479">Metal-binding</keyword>
<keyword id="KW-1185">Reference proteome</keyword>